<dbReference type="EC" id="1.5.1.2" evidence="1"/>
<dbReference type="EMBL" id="BA000017">
    <property type="protein sequence ID" value="BAB57665.1"/>
    <property type="molecule type" value="Genomic_DNA"/>
</dbReference>
<dbReference type="RefSeq" id="WP_000779749.1">
    <property type="nucleotide sequence ID" value="NC_002758.2"/>
</dbReference>
<dbReference type="SMR" id="Q99TZ0"/>
<dbReference type="KEGG" id="sav:SAV1503"/>
<dbReference type="HOGENOM" id="CLU_042344_0_1_9"/>
<dbReference type="PhylomeDB" id="Q99TZ0"/>
<dbReference type="UniPathway" id="UPA00098">
    <property type="reaction ID" value="UER00361"/>
</dbReference>
<dbReference type="Proteomes" id="UP000002481">
    <property type="component" value="Chromosome"/>
</dbReference>
<dbReference type="GO" id="GO:0005737">
    <property type="term" value="C:cytoplasm"/>
    <property type="evidence" value="ECO:0007669"/>
    <property type="project" value="UniProtKB-SubCell"/>
</dbReference>
<dbReference type="GO" id="GO:0004735">
    <property type="term" value="F:pyrroline-5-carboxylate reductase activity"/>
    <property type="evidence" value="ECO:0007669"/>
    <property type="project" value="UniProtKB-UniRule"/>
</dbReference>
<dbReference type="GO" id="GO:0055129">
    <property type="term" value="P:L-proline biosynthetic process"/>
    <property type="evidence" value="ECO:0007669"/>
    <property type="project" value="UniProtKB-UniRule"/>
</dbReference>
<dbReference type="FunFam" id="1.10.3730.10:FF:000001">
    <property type="entry name" value="Pyrroline-5-carboxylate reductase"/>
    <property type="match status" value="1"/>
</dbReference>
<dbReference type="Gene3D" id="3.40.50.720">
    <property type="entry name" value="NAD(P)-binding Rossmann-like Domain"/>
    <property type="match status" value="1"/>
</dbReference>
<dbReference type="Gene3D" id="1.10.3730.10">
    <property type="entry name" value="ProC C-terminal domain-like"/>
    <property type="match status" value="1"/>
</dbReference>
<dbReference type="HAMAP" id="MF_01925">
    <property type="entry name" value="P5C_reductase"/>
    <property type="match status" value="1"/>
</dbReference>
<dbReference type="InterPro" id="IPR008927">
    <property type="entry name" value="6-PGluconate_DH-like_C_sf"/>
</dbReference>
<dbReference type="InterPro" id="IPR036291">
    <property type="entry name" value="NAD(P)-bd_dom_sf"/>
</dbReference>
<dbReference type="InterPro" id="IPR028939">
    <property type="entry name" value="P5C_Rdtase_cat_N"/>
</dbReference>
<dbReference type="InterPro" id="IPR029036">
    <property type="entry name" value="P5CR_dimer"/>
</dbReference>
<dbReference type="InterPro" id="IPR000304">
    <property type="entry name" value="Pyrroline-COOH_reductase"/>
</dbReference>
<dbReference type="NCBIfam" id="TIGR00112">
    <property type="entry name" value="proC"/>
    <property type="match status" value="1"/>
</dbReference>
<dbReference type="PANTHER" id="PTHR11645">
    <property type="entry name" value="PYRROLINE-5-CARBOXYLATE REDUCTASE"/>
    <property type="match status" value="1"/>
</dbReference>
<dbReference type="PANTHER" id="PTHR11645:SF0">
    <property type="entry name" value="PYRROLINE-5-CARBOXYLATE REDUCTASE 3"/>
    <property type="match status" value="1"/>
</dbReference>
<dbReference type="Pfam" id="PF03807">
    <property type="entry name" value="F420_oxidored"/>
    <property type="match status" value="1"/>
</dbReference>
<dbReference type="Pfam" id="PF14748">
    <property type="entry name" value="P5CR_dimer"/>
    <property type="match status" value="1"/>
</dbReference>
<dbReference type="PIRSF" id="PIRSF000193">
    <property type="entry name" value="Pyrrol-5-carb_rd"/>
    <property type="match status" value="1"/>
</dbReference>
<dbReference type="SUPFAM" id="SSF48179">
    <property type="entry name" value="6-phosphogluconate dehydrogenase C-terminal domain-like"/>
    <property type="match status" value="1"/>
</dbReference>
<dbReference type="SUPFAM" id="SSF51735">
    <property type="entry name" value="NAD(P)-binding Rossmann-fold domains"/>
    <property type="match status" value="1"/>
</dbReference>
<accession>Q99TZ0</accession>
<proteinExistence type="inferred from homology"/>
<protein>
    <recommendedName>
        <fullName evidence="1">Pyrroline-5-carboxylate reductase</fullName>
        <shortName evidence="1">P5C reductase</shortName>
        <shortName evidence="1">P5CR</shortName>
        <ecNumber evidence="1">1.5.1.2</ecNumber>
    </recommendedName>
    <alternativeName>
        <fullName evidence="1">PCA reductase</fullName>
    </alternativeName>
</protein>
<reference key="1">
    <citation type="journal article" date="2001" name="Lancet">
        <title>Whole genome sequencing of meticillin-resistant Staphylococcus aureus.</title>
        <authorList>
            <person name="Kuroda M."/>
            <person name="Ohta T."/>
            <person name="Uchiyama I."/>
            <person name="Baba T."/>
            <person name="Yuzawa H."/>
            <person name="Kobayashi I."/>
            <person name="Cui L."/>
            <person name="Oguchi A."/>
            <person name="Aoki K."/>
            <person name="Nagai Y."/>
            <person name="Lian J.-Q."/>
            <person name="Ito T."/>
            <person name="Kanamori M."/>
            <person name="Matsumaru H."/>
            <person name="Maruyama A."/>
            <person name="Murakami H."/>
            <person name="Hosoyama A."/>
            <person name="Mizutani-Ui Y."/>
            <person name="Takahashi N.K."/>
            <person name="Sawano T."/>
            <person name="Inoue R."/>
            <person name="Kaito C."/>
            <person name="Sekimizu K."/>
            <person name="Hirakawa H."/>
            <person name="Kuhara S."/>
            <person name="Goto S."/>
            <person name="Yabuzaki J."/>
            <person name="Kanehisa M."/>
            <person name="Yamashita A."/>
            <person name="Oshima K."/>
            <person name="Furuya K."/>
            <person name="Yoshino C."/>
            <person name="Shiba T."/>
            <person name="Hattori M."/>
            <person name="Ogasawara N."/>
            <person name="Hayashi H."/>
            <person name="Hiramatsu K."/>
        </authorList>
    </citation>
    <scope>NUCLEOTIDE SEQUENCE [LARGE SCALE GENOMIC DNA]</scope>
    <source>
        <strain>Mu50 / ATCC 700699</strain>
    </source>
</reference>
<feature type="chain" id="PRO_0000187299" description="Pyrroline-5-carboxylate reductase">
    <location>
        <begin position="1"/>
        <end position="271"/>
    </location>
</feature>
<evidence type="ECO:0000255" key="1">
    <source>
        <dbReference type="HAMAP-Rule" id="MF_01925"/>
    </source>
</evidence>
<organism>
    <name type="scientific">Staphylococcus aureus (strain Mu50 / ATCC 700699)</name>
    <dbReference type="NCBI Taxonomy" id="158878"/>
    <lineage>
        <taxon>Bacteria</taxon>
        <taxon>Bacillati</taxon>
        <taxon>Bacillota</taxon>
        <taxon>Bacilli</taxon>
        <taxon>Bacillales</taxon>
        <taxon>Staphylococcaceae</taxon>
        <taxon>Staphylococcus</taxon>
    </lineage>
</organism>
<keyword id="KW-0028">Amino-acid biosynthesis</keyword>
<keyword id="KW-0963">Cytoplasm</keyword>
<keyword id="KW-0521">NADP</keyword>
<keyword id="KW-0560">Oxidoreductase</keyword>
<keyword id="KW-0641">Proline biosynthesis</keyword>
<comment type="function">
    <text evidence="1">Catalyzes the reduction of 1-pyrroline-5-carboxylate (PCA) to L-proline.</text>
</comment>
<comment type="catalytic activity">
    <reaction evidence="1">
        <text>L-proline + NADP(+) = (S)-1-pyrroline-5-carboxylate + NADPH + 2 H(+)</text>
        <dbReference type="Rhea" id="RHEA:14109"/>
        <dbReference type="ChEBI" id="CHEBI:15378"/>
        <dbReference type="ChEBI" id="CHEBI:17388"/>
        <dbReference type="ChEBI" id="CHEBI:57783"/>
        <dbReference type="ChEBI" id="CHEBI:58349"/>
        <dbReference type="ChEBI" id="CHEBI:60039"/>
        <dbReference type="EC" id="1.5.1.2"/>
    </reaction>
</comment>
<comment type="catalytic activity">
    <reaction evidence="1">
        <text>L-proline + NAD(+) = (S)-1-pyrroline-5-carboxylate + NADH + 2 H(+)</text>
        <dbReference type="Rhea" id="RHEA:14105"/>
        <dbReference type="ChEBI" id="CHEBI:15378"/>
        <dbReference type="ChEBI" id="CHEBI:17388"/>
        <dbReference type="ChEBI" id="CHEBI:57540"/>
        <dbReference type="ChEBI" id="CHEBI:57945"/>
        <dbReference type="ChEBI" id="CHEBI:60039"/>
        <dbReference type="EC" id="1.5.1.2"/>
    </reaction>
</comment>
<comment type="pathway">
    <text evidence="1">Amino-acid biosynthesis; L-proline biosynthesis; L-proline from L-glutamate 5-semialdehyde: step 1/1.</text>
</comment>
<comment type="subcellular location">
    <subcellularLocation>
        <location evidence="1">Cytoplasm</location>
    </subcellularLocation>
</comment>
<comment type="similarity">
    <text evidence="1">Belongs to the pyrroline-5-carboxylate reductase family.</text>
</comment>
<gene>
    <name evidence="1" type="primary">proC</name>
    <name type="ordered locus">SAV1503</name>
</gene>
<name>P5CR_STAAM</name>
<sequence>MKLVFYGAGNMAQAIFTGIINSSNLDANDIYLTNKSNEQALKAFAEKLGVNYSYDDATLLKDADYVFLGTKPHDFDALATRIKPHITKDNCFISIMAGIPIDYIKQQLECQNPVARIMPNTNAQVGHSVTGISFSNNFDPKSKDEINDLVKAFGSVIEVSEDHLHQVTAITGSGPAFLYHVFEQYVKAGTKLGLEKEQVEESIRNLIIGTSKMIERSDLSMAQLRKNITSKGGTTQAGLDTLSQYDLVSIFEDCLNAAVDRSIELSNVEDQ</sequence>